<sequence>MHLFTVGVNHTTAPVSIRENVAFQNEHLSGALRDLNSHGIREAAILSTCNRTELYCNTDDPQKALEWLANYHRLKPQAIAPYMYTLPQENAVKHAFRVASGLDSMVLGEAQILGQMKQAVRIAENAGTLGTLLHKLFQRTFSVAKEVRTNTNIGANSVSLAAASTRLAQRIFGALNNQHVLFIGAGEMIELCAEHFAAHRPLSLTVANRTLERGQELAASIGGTSMLLADLPDRLAEFDIVITSTASQLPIVGLGMVERAIRARKHKPMFMVDLAVPRDIEPEAGELDDVFLYTVDDLAQIVQEGMENRQEAAAEAEAIIDMRVENFMQWLKTRSAVPTIRALREQAERHRLNELEKARKLLARGHDPAQVLDALSNALTNKLLHGPSHALNSATGEDREQLEATLRQLYQIHH</sequence>
<reference key="1">
    <citation type="submission" date="2006-03" db="EMBL/GenBank/DDBJ databases">
        <title>Complete sequence of Methylobacillus flagellatus KT.</title>
        <authorList>
            <consortium name="US DOE Joint Genome Institute"/>
            <person name="Copeland A."/>
            <person name="Lucas S."/>
            <person name="Lapidus A."/>
            <person name="Barry K."/>
            <person name="Detter J.C."/>
            <person name="Glavina del Rio T."/>
            <person name="Hammon N."/>
            <person name="Israni S."/>
            <person name="Dalin E."/>
            <person name="Tice H."/>
            <person name="Pitluck S."/>
            <person name="Brettin T."/>
            <person name="Bruce D."/>
            <person name="Han C."/>
            <person name="Tapia R."/>
            <person name="Saunders E."/>
            <person name="Gilna P."/>
            <person name="Schmutz J."/>
            <person name="Larimer F."/>
            <person name="Land M."/>
            <person name="Kyrpides N."/>
            <person name="Anderson I."/>
            <person name="Richardson P."/>
        </authorList>
    </citation>
    <scope>NUCLEOTIDE SEQUENCE [LARGE SCALE GENOMIC DNA]</scope>
    <source>
        <strain>ATCC 51484 / DSM 6875 / VKM B-1610 / KT</strain>
    </source>
</reference>
<accession>Q1GYE9</accession>
<gene>
    <name evidence="1" type="primary">hemA</name>
    <name type="ordered locus">Mfla_2473</name>
</gene>
<organism>
    <name type="scientific">Methylobacillus flagellatus (strain ATCC 51484 / DSM 6875 / VKM B-1610 / KT)</name>
    <dbReference type="NCBI Taxonomy" id="265072"/>
    <lineage>
        <taxon>Bacteria</taxon>
        <taxon>Pseudomonadati</taxon>
        <taxon>Pseudomonadota</taxon>
        <taxon>Betaproteobacteria</taxon>
        <taxon>Nitrosomonadales</taxon>
        <taxon>Methylophilaceae</taxon>
        <taxon>Methylobacillus</taxon>
    </lineage>
</organism>
<evidence type="ECO:0000255" key="1">
    <source>
        <dbReference type="HAMAP-Rule" id="MF_00087"/>
    </source>
</evidence>
<feature type="chain" id="PRO_1000004638" description="Glutamyl-tRNA reductase">
    <location>
        <begin position="1"/>
        <end position="414"/>
    </location>
</feature>
<feature type="active site" description="Nucleophile" evidence="1">
    <location>
        <position position="49"/>
    </location>
</feature>
<feature type="binding site" evidence="1">
    <location>
        <begin position="48"/>
        <end position="51"/>
    </location>
    <ligand>
        <name>substrate</name>
    </ligand>
</feature>
<feature type="binding site" evidence="1">
    <location>
        <position position="104"/>
    </location>
    <ligand>
        <name>substrate</name>
    </ligand>
</feature>
<feature type="binding site" evidence="1">
    <location>
        <begin position="109"/>
        <end position="111"/>
    </location>
    <ligand>
        <name>substrate</name>
    </ligand>
</feature>
<feature type="binding site" evidence="1">
    <location>
        <position position="115"/>
    </location>
    <ligand>
        <name>substrate</name>
    </ligand>
</feature>
<feature type="binding site" evidence="1">
    <location>
        <begin position="184"/>
        <end position="189"/>
    </location>
    <ligand>
        <name>NADP(+)</name>
        <dbReference type="ChEBI" id="CHEBI:58349"/>
    </ligand>
</feature>
<feature type="site" description="Important for activity" evidence="1">
    <location>
        <position position="94"/>
    </location>
</feature>
<keyword id="KW-0521">NADP</keyword>
<keyword id="KW-0560">Oxidoreductase</keyword>
<keyword id="KW-0627">Porphyrin biosynthesis</keyword>
<keyword id="KW-1185">Reference proteome</keyword>
<dbReference type="EC" id="1.2.1.70" evidence="1"/>
<dbReference type="EMBL" id="CP000284">
    <property type="protein sequence ID" value="ABE50738.1"/>
    <property type="molecule type" value="Genomic_DNA"/>
</dbReference>
<dbReference type="RefSeq" id="WP_011480691.1">
    <property type="nucleotide sequence ID" value="NC_007947.1"/>
</dbReference>
<dbReference type="SMR" id="Q1GYE9"/>
<dbReference type="STRING" id="265072.Mfla_2473"/>
<dbReference type="KEGG" id="mfa:Mfla_2473"/>
<dbReference type="eggNOG" id="COG0373">
    <property type="taxonomic scope" value="Bacteria"/>
</dbReference>
<dbReference type="HOGENOM" id="CLU_035113_2_2_4"/>
<dbReference type="OrthoDB" id="110209at2"/>
<dbReference type="UniPathway" id="UPA00251">
    <property type="reaction ID" value="UER00316"/>
</dbReference>
<dbReference type="Proteomes" id="UP000002440">
    <property type="component" value="Chromosome"/>
</dbReference>
<dbReference type="GO" id="GO:0008883">
    <property type="term" value="F:glutamyl-tRNA reductase activity"/>
    <property type="evidence" value="ECO:0007669"/>
    <property type="project" value="UniProtKB-UniRule"/>
</dbReference>
<dbReference type="GO" id="GO:0050661">
    <property type="term" value="F:NADP binding"/>
    <property type="evidence" value="ECO:0007669"/>
    <property type="project" value="InterPro"/>
</dbReference>
<dbReference type="GO" id="GO:0019353">
    <property type="term" value="P:protoporphyrinogen IX biosynthetic process from glutamate"/>
    <property type="evidence" value="ECO:0007669"/>
    <property type="project" value="TreeGrafter"/>
</dbReference>
<dbReference type="CDD" id="cd05213">
    <property type="entry name" value="NAD_bind_Glutamyl_tRNA_reduct"/>
    <property type="match status" value="1"/>
</dbReference>
<dbReference type="FunFam" id="3.30.460.30:FF:000001">
    <property type="entry name" value="Glutamyl-tRNA reductase"/>
    <property type="match status" value="1"/>
</dbReference>
<dbReference type="FunFam" id="3.40.50.720:FF:000031">
    <property type="entry name" value="Glutamyl-tRNA reductase"/>
    <property type="match status" value="1"/>
</dbReference>
<dbReference type="Gene3D" id="3.30.460.30">
    <property type="entry name" value="Glutamyl-tRNA reductase, N-terminal domain"/>
    <property type="match status" value="1"/>
</dbReference>
<dbReference type="Gene3D" id="3.40.50.720">
    <property type="entry name" value="NAD(P)-binding Rossmann-like Domain"/>
    <property type="match status" value="1"/>
</dbReference>
<dbReference type="HAMAP" id="MF_00087">
    <property type="entry name" value="Glu_tRNA_reductase"/>
    <property type="match status" value="1"/>
</dbReference>
<dbReference type="InterPro" id="IPR000343">
    <property type="entry name" value="4pyrrol_synth_GluRdtase"/>
</dbReference>
<dbReference type="InterPro" id="IPR015896">
    <property type="entry name" value="4pyrrol_synth_GluRdtase_dimer"/>
</dbReference>
<dbReference type="InterPro" id="IPR015895">
    <property type="entry name" value="4pyrrol_synth_GluRdtase_N"/>
</dbReference>
<dbReference type="InterPro" id="IPR018214">
    <property type="entry name" value="GluRdtase_CS"/>
</dbReference>
<dbReference type="InterPro" id="IPR036453">
    <property type="entry name" value="GluRdtase_dimer_dom_sf"/>
</dbReference>
<dbReference type="InterPro" id="IPR036343">
    <property type="entry name" value="GluRdtase_N_sf"/>
</dbReference>
<dbReference type="InterPro" id="IPR036291">
    <property type="entry name" value="NAD(P)-bd_dom_sf"/>
</dbReference>
<dbReference type="InterPro" id="IPR006151">
    <property type="entry name" value="Shikm_DH/Glu-tRNA_Rdtase"/>
</dbReference>
<dbReference type="NCBIfam" id="TIGR01035">
    <property type="entry name" value="hemA"/>
    <property type="match status" value="1"/>
</dbReference>
<dbReference type="PANTHER" id="PTHR43013">
    <property type="entry name" value="GLUTAMYL-TRNA REDUCTASE"/>
    <property type="match status" value="1"/>
</dbReference>
<dbReference type="PANTHER" id="PTHR43013:SF1">
    <property type="entry name" value="GLUTAMYL-TRNA REDUCTASE"/>
    <property type="match status" value="1"/>
</dbReference>
<dbReference type="Pfam" id="PF00745">
    <property type="entry name" value="GlutR_dimer"/>
    <property type="match status" value="1"/>
</dbReference>
<dbReference type="Pfam" id="PF05201">
    <property type="entry name" value="GlutR_N"/>
    <property type="match status" value="1"/>
</dbReference>
<dbReference type="Pfam" id="PF01488">
    <property type="entry name" value="Shikimate_DH"/>
    <property type="match status" value="1"/>
</dbReference>
<dbReference type="PIRSF" id="PIRSF000445">
    <property type="entry name" value="4pyrrol_synth_GluRdtase"/>
    <property type="match status" value="1"/>
</dbReference>
<dbReference type="SUPFAM" id="SSF69742">
    <property type="entry name" value="Glutamyl tRNA-reductase catalytic, N-terminal domain"/>
    <property type="match status" value="1"/>
</dbReference>
<dbReference type="SUPFAM" id="SSF69075">
    <property type="entry name" value="Glutamyl tRNA-reductase dimerization domain"/>
    <property type="match status" value="1"/>
</dbReference>
<dbReference type="SUPFAM" id="SSF51735">
    <property type="entry name" value="NAD(P)-binding Rossmann-fold domains"/>
    <property type="match status" value="1"/>
</dbReference>
<dbReference type="PROSITE" id="PS00747">
    <property type="entry name" value="GLUTR"/>
    <property type="match status" value="1"/>
</dbReference>
<protein>
    <recommendedName>
        <fullName evidence="1">Glutamyl-tRNA reductase</fullName>
        <shortName evidence="1">GluTR</shortName>
        <ecNumber evidence="1">1.2.1.70</ecNumber>
    </recommendedName>
</protein>
<comment type="function">
    <text evidence="1">Catalyzes the NADPH-dependent reduction of glutamyl-tRNA(Glu) to glutamate 1-semialdehyde (GSA).</text>
</comment>
<comment type="catalytic activity">
    <reaction evidence="1">
        <text>(S)-4-amino-5-oxopentanoate + tRNA(Glu) + NADP(+) = L-glutamyl-tRNA(Glu) + NADPH + H(+)</text>
        <dbReference type="Rhea" id="RHEA:12344"/>
        <dbReference type="Rhea" id="RHEA-COMP:9663"/>
        <dbReference type="Rhea" id="RHEA-COMP:9680"/>
        <dbReference type="ChEBI" id="CHEBI:15378"/>
        <dbReference type="ChEBI" id="CHEBI:57501"/>
        <dbReference type="ChEBI" id="CHEBI:57783"/>
        <dbReference type="ChEBI" id="CHEBI:58349"/>
        <dbReference type="ChEBI" id="CHEBI:78442"/>
        <dbReference type="ChEBI" id="CHEBI:78520"/>
        <dbReference type="EC" id="1.2.1.70"/>
    </reaction>
</comment>
<comment type="pathway">
    <text evidence="1">Porphyrin-containing compound metabolism; protoporphyrin-IX biosynthesis; 5-aminolevulinate from L-glutamyl-tRNA(Glu): step 1/2.</text>
</comment>
<comment type="subunit">
    <text evidence="1">Homodimer.</text>
</comment>
<comment type="domain">
    <text evidence="1">Possesses an unusual extended V-shaped dimeric structure with each monomer consisting of three distinct domains arranged along a curved 'spinal' alpha-helix. The N-terminal catalytic domain specifically recognizes the glutamate moiety of the substrate. The second domain is the NADPH-binding domain, and the third C-terminal domain is responsible for dimerization.</text>
</comment>
<comment type="miscellaneous">
    <text evidence="1">During catalysis, the active site Cys acts as a nucleophile attacking the alpha-carbonyl group of tRNA-bound glutamate with the formation of a thioester intermediate between enzyme and glutamate, and the concomitant release of tRNA(Glu). The thioester intermediate is finally reduced by direct hydride transfer from NADPH, to form the product GSA.</text>
</comment>
<comment type="similarity">
    <text evidence="1">Belongs to the glutamyl-tRNA reductase family.</text>
</comment>
<proteinExistence type="inferred from homology"/>
<name>HEM1_METFK</name>